<evidence type="ECO:0000255" key="1">
    <source>
        <dbReference type="HAMAP-Rule" id="MF_00435"/>
    </source>
</evidence>
<evidence type="ECO:0000255" key="2">
    <source>
        <dbReference type="PROSITE-ProRule" id="PRU01197"/>
    </source>
</evidence>
<evidence type="ECO:0000255" key="3">
    <source>
        <dbReference type="PROSITE-ProRule" id="PRU01198"/>
    </source>
</evidence>
<sequence length="330" mass="36054">MNVYYEKDADLAYLQGKKIAVLGYGSQGHAHSLNLHESGLNVRVGLRPESASCAKAREAGLEVTSVAEATKWADIVMVLLPDQNQKAVYEAEIAPNLEPGNTLAFGHGFNIHYKQIVPASSVNVIMIAPKSPGHLVRRTYTEGNGVPCLIAVHQDPTGEAKQQALAWAKALGGTKAGVIETNFKNETETDLFGEQAVLCGGSAELIKAGFETLVEAGYPEELAYFECMHELKLIVDLYYEGGLSRMNYSVSDTAEYGGMTRGPRLITPAVKAEMKKILEEVQDGRFAKEFIDECNGGYQNLSKLRESNSNHAIEKVGAKLRNMMSWLIKK</sequence>
<reference key="1">
    <citation type="submission" date="2005-08" db="EMBL/GenBank/DDBJ databases">
        <title>Complete sequence of Chlorobium chlorochromatii CaD3.</title>
        <authorList>
            <consortium name="US DOE Joint Genome Institute"/>
            <person name="Copeland A."/>
            <person name="Lucas S."/>
            <person name="Lapidus A."/>
            <person name="Barry K."/>
            <person name="Detter J.C."/>
            <person name="Glavina T."/>
            <person name="Hammon N."/>
            <person name="Israni S."/>
            <person name="Pitluck S."/>
            <person name="Bryant D."/>
            <person name="Schmutz J."/>
            <person name="Larimer F."/>
            <person name="Land M."/>
            <person name="Kyrpides N."/>
            <person name="Ivanova N."/>
            <person name="Richardson P."/>
        </authorList>
    </citation>
    <scope>NUCLEOTIDE SEQUENCE [LARGE SCALE GENOMIC DNA]</scope>
    <source>
        <strain>CaD3</strain>
    </source>
</reference>
<keyword id="KW-0028">Amino-acid biosynthesis</keyword>
<keyword id="KW-0100">Branched-chain amino acid biosynthesis</keyword>
<keyword id="KW-0460">Magnesium</keyword>
<keyword id="KW-0479">Metal-binding</keyword>
<keyword id="KW-0521">NADP</keyword>
<keyword id="KW-0560">Oxidoreductase</keyword>
<name>ILVC_CHLCH</name>
<protein>
    <recommendedName>
        <fullName evidence="1">Ketol-acid reductoisomerase (NADP(+))</fullName>
        <shortName evidence="1">KARI</shortName>
        <ecNumber evidence="1">1.1.1.86</ecNumber>
    </recommendedName>
    <alternativeName>
        <fullName evidence="1">Acetohydroxy-acid isomeroreductase</fullName>
        <shortName evidence="1">AHIR</shortName>
    </alternativeName>
    <alternativeName>
        <fullName evidence="1">Alpha-keto-beta-hydroxylacyl reductoisomerase</fullName>
    </alternativeName>
    <alternativeName>
        <fullName evidence="1">Ketol-acid reductoisomerase type 1</fullName>
    </alternativeName>
    <alternativeName>
        <fullName evidence="1">Ketol-acid reductoisomerase type I</fullName>
    </alternativeName>
</protein>
<accession>Q3APC3</accession>
<organism>
    <name type="scientific">Chlorobium chlorochromatii (strain CaD3)</name>
    <dbReference type="NCBI Taxonomy" id="340177"/>
    <lineage>
        <taxon>Bacteria</taxon>
        <taxon>Pseudomonadati</taxon>
        <taxon>Chlorobiota</taxon>
        <taxon>Chlorobiia</taxon>
        <taxon>Chlorobiales</taxon>
        <taxon>Chlorobiaceae</taxon>
        <taxon>Chlorobium/Pelodictyon group</taxon>
        <taxon>Chlorobium</taxon>
    </lineage>
</organism>
<feature type="chain" id="PRO_0000226171" description="Ketol-acid reductoisomerase (NADP(+))">
    <location>
        <begin position="1"/>
        <end position="330"/>
    </location>
</feature>
<feature type="domain" description="KARI N-terminal Rossmann" evidence="2">
    <location>
        <begin position="1"/>
        <end position="181"/>
    </location>
</feature>
<feature type="domain" description="KARI C-terminal knotted" evidence="3">
    <location>
        <begin position="182"/>
        <end position="327"/>
    </location>
</feature>
<feature type="active site" evidence="1">
    <location>
        <position position="107"/>
    </location>
</feature>
<feature type="binding site" evidence="1">
    <location>
        <begin position="24"/>
        <end position="27"/>
    </location>
    <ligand>
        <name>NADP(+)</name>
        <dbReference type="ChEBI" id="CHEBI:58349"/>
    </ligand>
</feature>
<feature type="binding site" evidence="1">
    <location>
        <position position="47"/>
    </location>
    <ligand>
        <name>NADP(+)</name>
        <dbReference type="ChEBI" id="CHEBI:58349"/>
    </ligand>
</feature>
<feature type="binding site" evidence="1">
    <location>
        <position position="50"/>
    </location>
    <ligand>
        <name>NADP(+)</name>
        <dbReference type="ChEBI" id="CHEBI:58349"/>
    </ligand>
</feature>
<feature type="binding site" evidence="1">
    <location>
        <position position="52"/>
    </location>
    <ligand>
        <name>NADP(+)</name>
        <dbReference type="ChEBI" id="CHEBI:58349"/>
    </ligand>
</feature>
<feature type="binding site" evidence="1">
    <location>
        <begin position="82"/>
        <end position="85"/>
    </location>
    <ligand>
        <name>NADP(+)</name>
        <dbReference type="ChEBI" id="CHEBI:58349"/>
    </ligand>
</feature>
<feature type="binding site" evidence="1">
    <location>
        <position position="133"/>
    </location>
    <ligand>
        <name>NADP(+)</name>
        <dbReference type="ChEBI" id="CHEBI:58349"/>
    </ligand>
</feature>
<feature type="binding site" evidence="1">
    <location>
        <position position="190"/>
    </location>
    <ligand>
        <name>Mg(2+)</name>
        <dbReference type="ChEBI" id="CHEBI:18420"/>
        <label>1</label>
    </ligand>
</feature>
<feature type="binding site" evidence="1">
    <location>
        <position position="190"/>
    </location>
    <ligand>
        <name>Mg(2+)</name>
        <dbReference type="ChEBI" id="CHEBI:18420"/>
        <label>2</label>
    </ligand>
</feature>
<feature type="binding site" evidence="1">
    <location>
        <position position="194"/>
    </location>
    <ligand>
        <name>Mg(2+)</name>
        <dbReference type="ChEBI" id="CHEBI:18420"/>
        <label>1</label>
    </ligand>
</feature>
<feature type="binding site" evidence="1">
    <location>
        <position position="226"/>
    </location>
    <ligand>
        <name>Mg(2+)</name>
        <dbReference type="ChEBI" id="CHEBI:18420"/>
        <label>2</label>
    </ligand>
</feature>
<feature type="binding site" evidence="1">
    <location>
        <position position="230"/>
    </location>
    <ligand>
        <name>Mg(2+)</name>
        <dbReference type="ChEBI" id="CHEBI:18420"/>
        <label>2</label>
    </ligand>
</feature>
<feature type="binding site" evidence="1">
    <location>
        <position position="251"/>
    </location>
    <ligand>
        <name>substrate</name>
    </ligand>
</feature>
<gene>
    <name evidence="1" type="primary">ilvC</name>
    <name type="ordered locus">Cag_1902</name>
</gene>
<proteinExistence type="inferred from homology"/>
<comment type="function">
    <text evidence="1">Involved in the biosynthesis of branched-chain amino acids (BCAA). Catalyzes an alkyl-migration followed by a ketol-acid reduction of (S)-2-acetolactate (S2AL) to yield (R)-2,3-dihydroxy-isovalerate. In the isomerase reaction, S2AL is rearranged via a Mg-dependent methyl migration to produce 3-hydroxy-3-methyl-2-ketobutyrate (HMKB). In the reductase reaction, this 2-ketoacid undergoes a metal-dependent reduction by NADPH to yield (R)-2,3-dihydroxy-isovalerate.</text>
</comment>
<comment type="catalytic activity">
    <reaction evidence="1">
        <text>(2R)-2,3-dihydroxy-3-methylbutanoate + NADP(+) = (2S)-2-acetolactate + NADPH + H(+)</text>
        <dbReference type="Rhea" id="RHEA:22068"/>
        <dbReference type="ChEBI" id="CHEBI:15378"/>
        <dbReference type="ChEBI" id="CHEBI:49072"/>
        <dbReference type="ChEBI" id="CHEBI:57783"/>
        <dbReference type="ChEBI" id="CHEBI:58349"/>
        <dbReference type="ChEBI" id="CHEBI:58476"/>
        <dbReference type="EC" id="1.1.1.86"/>
    </reaction>
</comment>
<comment type="catalytic activity">
    <reaction evidence="1">
        <text>(2R,3R)-2,3-dihydroxy-3-methylpentanoate + NADP(+) = (S)-2-ethyl-2-hydroxy-3-oxobutanoate + NADPH + H(+)</text>
        <dbReference type="Rhea" id="RHEA:13493"/>
        <dbReference type="ChEBI" id="CHEBI:15378"/>
        <dbReference type="ChEBI" id="CHEBI:49256"/>
        <dbReference type="ChEBI" id="CHEBI:49258"/>
        <dbReference type="ChEBI" id="CHEBI:57783"/>
        <dbReference type="ChEBI" id="CHEBI:58349"/>
        <dbReference type="EC" id="1.1.1.86"/>
    </reaction>
</comment>
<comment type="cofactor">
    <cofactor evidence="1">
        <name>Mg(2+)</name>
        <dbReference type="ChEBI" id="CHEBI:18420"/>
    </cofactor>
    <text evidence="1">Binds 2 magnesium ions per subunit.</text>
</comment>
<comment type="pathway">
    <text evidence="1">Amino-acid biosynthesis; L-isoleucine biosynthesis; L-isoleucine from 2-oxobutanoate: step 2/4.</text>
</comment>
<comment type="pathway">
    <text evidence="1">Amino-acid biosynthesis; L-valine biosynthesis; L-valine from pyruvate: step 2/4.</text>
</comment>
<comment type="similarity">
    <text evidence="1">Belongs to the ketol-acid reductoisomerase family.</text>
</comment>
<dbReference type="EC" id="1.1.1.86" evidence="1"/>
<dbReference type="EMBL" id="CP000108">
    <property type="protein sequence ID" value="ABB29152.1"/>
    <property type="molecule type" value="Genomic_DNA"/>
</dbReference>
<dbReference type="SMR" id="Q3APC3"/>
<dbReference type="STRING" id="340177.Cag_1902"/>
<dbReference type="KEGG" id="cch:Cag_1902"/>
<dbReference type="eggNOG" id="COG0059">
    <property type="taxonomic scope" value="Bacteria"/>
</dbReference>
<dbReference type="HOGENOM" id="CLU_033821_0_1_10"/>
<dbReference type="OrthoDB" id="9804088at2"/>
<dbReference type="UniPathway" id="UPA00047">
    <property type="reaction ID" value="UER00056"/>
</dbReference>
<dbReference type="UniPathway" id="UPA00049">
    <property type="reaction ID" value="UER00060"/>
</dbReference>
<dbReference type="GO" id="GO:0005829">
    <property type="term" value="C:cytosol"/>
    <property type="evidence" value="ECO:0007669"/>
    <property type="project" value="TreeGrafter"/>
</dbReference>
<dbReference type="GO" id="GO:0004455">
    <property type="term" value="F:ketol-acid reductoisomerase activity"/>
    <property type="evidence" value="ECO:0007669"/>
    <property type="project" value="UniProtKB-UniRule"/>
</dbReference>
<dbReference type="GO" id="GO:0000287">
    <property type="term" value="F:magnesium ion binding"/>
    <property type="evidence" value="ECO:0007669"/>
    <property type="project" value="UniProtKB-UniRule"/>
</dbReference>
<dbReference type="GO" id="GO:0050661">
    <property type="term" value="F:NADP binding"/>
    <property type="evidence" value="ECO:0007669"/>
    <property type="project" value="InterPro"/>
</dbReference>
<dbReference type="GO" id="GO:0009097">
    <property type="term" value="P:isoleucine biosynthetic process"/>
    <property type="evidence" value="ECO:0007669"/>
    <property type="project" value="UniProtKB-UniRule"/>
</dbReference>
<dbReference type="GO" id="GO:0009099">
    <property type="term" value="P:L-valine biosynthetic process"/>
    <property type="evidence" value="ECO:0007669"/>
    <property type="project" value="UniProtKB-UniRule"/>
</dbReference>
<dbReference type="FunFam" id="3.40.50.720:FF:000023">
    <property type="entry name" value="Ketol-acid reductoisomerase (NADP(+))"/>
    <property type="match status" value="1"/>
</dbReference>
<dbReference type="Gene3D" id="6.10.240.10">
    <property type="match status" value="1"/>
</dbReference>
<dbReference type="Gene3D" id="3.40.50.720">
    <property type="entry name" value="NAD(P)-binding Rossmann-like Domain"/>
    <property type="match status" value="1"/>
</dbReference>
<dbReference type="HAMAP" id="MF_00435">
    <property type="entry name" value="IlvC"/>
    <property type="match status" value="1"/>
</dbReference>
<dbReference type="InterPro" id="IPR008927">
    <property type="entry name" value="6-PGluconate_DH-like_C_sf"/>
</dbReference>
<dbReference type="InterPro" id="IPR013023">
    <property type="entry name" value="KARI"/>
</dbReference>
<dbReference type="InterPro" id="IPR000506">
    <property type="entry name" value="KARI_C"/>
</dbReference>
<dbReference type="InterPro" id="IPR013116">
    <property type="entry name" value="KARI_N"/>
</dbReference>
<dbReference type="InterPro" id="IPR014359">
    <property type="entry name" value="KARI_prok"/>
</dbReference>
<dbReference type="InterPro" id="IPR036291">
    <property type="entry name" value="NAD(P)-bd_dom_sf"/>
</dbReference>
<dbReference type="NCBIfam" id="TIGR00465">
    <property type="entry name" value="ilvC"/>
    <property type="match status" value="1"/>
</dbReference>
<dbReference type="NCBIfam" id="NF004017">
    <property type="entry name" value="PRK05479.1"/>
    <property type="match status" value="1"/>
</dbReference>
<dbReference type="NCBIfam" id="NF009940">
    <property type="entry name" value="PRK13403.1"/>
    <property type="match status" value="1"/>
</dbReference>
<dbReference type="PANTHER" id="PTHR21371">
    <property type="entry name" value="KETOL-ACID REDUCTOISOMERASE, MITOCHONDRIAL"/>
    <property type="match status" value="1"/>
</dbReference>
<dbReference type="PANTHER" id="PTHR21371:SF1">
    <property type="entry name" value="KETOL-ACID REDUCTOISOMERASE, MITOCHONDRIAL"/>
    <property type="match status" value="1"/>
</dbReference>
<dbReference type="Pfam" id="PF01450">
    <property type="entry name" value="KARI_C"/>
    <property type="match status" value="1"/>
</dbReference>
<dbReference type="Pfam" id="PF07991">
    <property type="entry name" value="KARI_N"/>
    <property type="match status" value="1"/>
</dbReference>
<dbReference type="PIRSF" id="PIRSF000116">
    <property type="entry name" value="IlvC_gammaproteo"/>
    <property type="match status" value="1"/>
</dbReference>
<dbReference type="SUPFAM" id="SSF48179">
    <property type="entry name" value="6-phosphogluconate dehydrogenase C-terminal domain-like"/>
    <property type="match status" value="1"/>
</dbReference>
<dbReference type="SUPFAM" id="SSF51735">
    <property type="entry name" value="NAD(P)-binding Rossmann-fold domains"/>
    <property type="match status" value="1"/>
</dbReference>
<dbReference type="PROSITE" id="PS51851">
    <property type="entry name" value="KARI_C"/>
    <property type="match status" value="1"/>
</dbReference>
<dbReference type="PROSITE" id="PS51850">
    <property type="entry name" value="KARI_N"/>
    <property type="match status" value="1"/>
</dbReference>